<keyword id="KW-0067">ATP-binding</keyword>
<keyword id="KW-0133">Cell shape</keyword>
<keyword id="KW-0961">Cell wall biogenesis/degradation</keyword>
<keyword id="KW-0963">Cytoplasm</keyword>
<keyword id="KW-0436">Ligase</keyword>
<keyword id="KW-0460">Magnesium</keyword>
<keyword id="KW-0464">Manganese</keyword>
<keyword id="KW-0479">Metal-binding</keyword>
<keyword id="KW-0547">Nucleotide-binding</keyword>
<keyword id="KW-0573">Peptidoglycan synthesis</keyword>
<feature type="chain" id="PRO_1000030476" description="D-alanine--D-alanine ligase">
    <location>
        <begin position="1"/>
        <end position="351"/>
    </location>
</feature>
<feature type="domain" description="ATP-grasp" evidence="2">
    <location>
        <begin position="146"/>
        <end position="340"/>
    </location>
</feature>
<feature type="binding site" evidence="2">
    <location>
        <begin position="173"/>
        <end position="226"/>
    </location>
    <ligand>
        <name>ATP</name>
        <dbReference type="ChEBI" id="CHEBI:30616"/>
    </ligand>
</feature>
<feature type="binding site" evidence="2">
    <location>
        <position position="295"/>
    </location>
    <ligand>
        <name>Mg(2+)</name>
        <dbReference type="ChEBI" id="CHEBI:18420"/>
        <label>1</label>
    </ligand>
</feature>
<feature type="binding site" evidence="2">
    <location>
        <position position="307"/>
    </location>
    <ligand>
        <name>Mg(2+)</name>
        <dbReference type="ChEBI" id="CHEBI:18420"/>
        <label>1</label>
    </ligand>
</feature>
<feature type="binding site" evidence="2">
    <location>
        <position position="307"/>
    </location>
    <ligand>
        <name>Mg(2+)</name>
        <dbReference type="ChEBI" id="CHEBI:18420"/>
        <label>2</label>
    </ligand>
</feature>
<feature type="binding site" evidence="2">
    <location>
        <position position="309"/>
    </location>
    <ligand>
        <name>Mg(2+)</name>
        <dbReference type="ChEBI" id="CHEBI:18420"/>
        <label>2</label>
    </ligand>
</feature>
<protein>
    <recommendedName>
        <fullName evidence="2">D-alanine--D-alanine ligase</fullName>
        <ecNumber evidence="2">6.3.2.4</ecNumber>
    </recommendedName>
    <alternativeName>
        <fullName evidence="2">D-Ala-D-Ala ligase</fullName>
    </alternativeName>
    <alternativeName>
        <fullName evidence="2">D-alanylalanine synthetase</fullName>
    </alternativeName>
</protein>
<proteinExistence type="inferred from homology"/>
<gene>
    <name evidence="2" type="primary">ddl</name>
    <name type="ordered locus">PEPE_1302</name>
</gene>
<organism>
    <name type="scientific">Pediococcus pentosaceus (strain ATCC 25745 / CCUG 21536 / LMG 10740 / 183-1w)</name>
    <dbReference type="NCBI Taxonomy" id="278197"/>
    <lineage>
        <taxon>Bacteria</taxon>
        <taxon>Bacillati</taxon>
        <taxon>Bacillota</taxon>
        <taxon>Bacilli</taxon>
        <taxon>Lactobacillales</taxon>
        <taxon>Lactobacillaceae</taxon>
        <taxon>Pediococcus</taxon>
    </lineage>
</organism>
<sequence length="351" mass="38351">MKIAVLAGGKSTERNVSLSSGSKITNALRSKGYDATMIDLFLGYELEDGQSYEDVFKSSNTSTDYEISDAVLTEEDIEELRTDGTVGLFGKNVLPILQAADFVFLALHGGDGENGKVQAVLDLNHIKYTGSGSLASGIAMDKAISKEIMLYNNIKTAQFAVLHAKDGIHPQLAFDYPMVVKPNSGGSSIGTRIVHDEAELAESLKDAYRFDDEIIVEEFITGREFSLGVVNGQAMPAIEIVVNDGWYDYEHKFQTGSTTKFVTPPEIEDDVHDEMKRVAVQTMDALGMTNYGRVDFLTNDTGVYVIEANNLPGMTPLSLLPQEAEAAGISYEDLCESIVLGKQKLYDELKK</sequence>
<name>DDL_PEDPA</name>
<comment type="function">
    <text evidence="2">Cell wall formation.</text>
</comment>
<comment type="catalytic activity">
    <reaction evidence="2">
        <text>2 D-alanine + ATP = D-alanyl-D-alanine + ADP + phosphate + H(+)</text>
        <dbReference type="Rhea" id="RHEA:11224"/>
        <dbReference type="ChEBI" id="CHEBI:15378"/>
        <dbReference type="ChEBI" id="CHEBI:30616"/>
        <dbReference type="ChEBI" id="CHEBI:43474"/>
        <dbReference type="ChEBI" id="CHEBI:57416"/>
        <dbReference type="ChEBI" id="CHEBI:57822"/>
        <dbReference type="ChEBI" id="CHEBI:456216"/>
        <dbReference type="EC" id="6.3.2.4"/>
    </reaction>
</comment>
<comment type="cofactor">
    <cofactor evidence="1">
        <name>Mg(2+)</name>
        <dbReference type="ChEBI" id="CHEBI:18420"/>
    </cofactor>
    <cofactor evidence="1">
        <name>Mn(2+)</name>
        <dbReference type="ChEBI" id="CHEBI:29035"/>
    </cofactor>
    <text evidence="1">Binds 2 magnesium or manganese ions per subunit.</text>
</comment>
<comment type="pathway">
    <text evidence="2">Cell wall biogenesis; peptidoglycan biosynthesis.</text>
</comment>
<comment type="subcellular location">
    <subcellularLocation>
        <location evidence="2">Cytoplasm</location>
    </subcellularLocation>
</comment>
<comment type="similarity">
    <text evidence="2">Belongs to the D-alanine--D-alanine ligase family.</text>
</comment>
<accession>Q03EM9</accession>
<dbReference type="EC" id="6.3.2.4" evidence="2"/>
<dbReference type="EMBL" id="CP000422">
    <property type="protein sequence ID" value="ABJ68343.1"/>
    <property type="molecule type" value="Genomic_DNA"/>
</dbReference>
<dbReference type="RefSeq" id="WP_002833700.1">
    <property type="nucleotide sequence ID" value="NC_008525.1"/>
</dbReference>
<dbReference type="SMR" id="Q03EM9"/>
<dbReference type="STRING" id="278197.PEPE_1302"/>
<dbReference type="GeneID" id="33061559"/>
<dbReference type="KEGG" id="ppe:PEPE_1302"/>
<dbReference type="eggNOG" id="COG1181">
    <property type="taxonomic scope" value="Bacteria"/>
</dbReference>
<dbReference type="HOGENOM" id="CLU_039268_1_1_9"/>
<dbReference type="OrthoDB" id="9813261at2"/>
<dbReference type="UniPathway" id="UPA00219"/>
<dbReference type="Proteomes" id="UP000000773">
    <property type="component" value="Chromosome"/>
</dbReference>
<dbReference type="GO" id="GO:0005737">
    <property type="term" value="C:cytoplasm"/>
    <property type="evidence" value="ECO:0007669"/>
    <property type="project" value="UniProtKB-SubCell"/>
</dbReference>
<dbReference type="GO" id="GO:0005524">
    <property type="term" value="F:ATP binding"/>
    <property type="evidence" value="ECO:0007669"/>
    <property type="project" value="UniProtKB-KW"/>
</dbReference>
<dbReference type="GO" id="GO:0008716">
    <property type="term" value="F:D-alanine-D-alanine ligase activity"/>
    <property type="evidence" value="ECO:0007669"/>
    <property type="project" value="UniProtKB-UniRule"/>
</dbReference>
<dbReference type="GO" id="GO:0046872">
    <property type="term" value="F:metal ion binding"/>
    <property type="evidence" value="ECO:0007669"/>
    <property type="project" value="UniProtKB-KW"/>
</dbReference>
<dbReference type="GO" id="GO:0071555">
    <property type="term" value="P:cell wall organization"/>
    <property type="evidence" value="ECO:0007669"/>
    <property type="project" value="UniProtKB-KW"/>
</dbReference>
<dbReference type="GO" id="GO:0009252">
    <property type="term" value="P:peptidoglycan biosynthetic process"/>
    <property type="evidence" value="ECO:0007669"/>
    <property type="project" value="UniProtKB-UniRule"/>
</dbReference>
<dbReference type="GO" id="GO:0008360">
    <property type="term" value="P:regulation of cell shape"/>
    <property type="evidence" value="ECO:0007669"/>
    <property type="project" value="UniProtKB-KW"/>
</dbReference>
<dbReference type="Gene3D" id="3.40.50.20">
    <property type="match status" value="1"/>
</dbReference>
<dbReference type="Gene3D" id="3.30.1490.20">
    <property type="entry name" value="ATP-grasp fold, A domain"/>
    <property type="match status" value="1"/>
</dbReference>
<dbReference type="Gene3D" id="3.30.470.20">
    <property type="entry name" value="ATP-grasp fold, B domain"/>
    <property type="match status" value="1"/>
</dbReference>
<dbReference type="HAMAP" id="MF_00047">
    <property type="entry name" value="Dala_Dala_lig"/>
    <property type="match status" value="1"/>
</dbReference>
<dbReference type="InterPro" id="IPR011761">
    <property type="entry name" value="ATP-grasp"/>
</dbReference>
<dbReference type="InterPro" id="IPR013815">
    <property type="entry name" value="ATP_grasp_subdomain_1"/>
</dbReference>
<dbReference type="InterPro" id="IPR000291">
    <property type="entry name" value="D-Ala_lig_Van_CS"/>
</dbReference>
<dbReference type="InterPro" id="IPR005905">
    <property type="entry name" value="D_ala_D_ala"/>
</dbReference>
<dbReference type="InterPro" id="IPR011095">
    <property type="entry name" value="Dala_Dala_lig_C"/>
</dbReference>
<dbReference type="InterPro" id="IPR011127">
    <property type="entry name" value="Dala_Dala_lig_N"/>
</dbReference>
<dbReference type="InterPro" id="IPR016185">
    <property type="entry name" value="PreATP-grasp_dom_sf"/>
</dbReference>
<dbReference type="NCBIfam" id="TIGR01205">
    <property type="entry name" value="D_ala_D_alaTIGR"/>
    <property type="match status" value="1"/>
</dbReference>
<dbReference type="NCBIfam" id="NF002378">
    <property type="entry name" value="PRK01372.1"/>
    <property type="match status" value="1"/>
</dbReference>
<dbReference type="PANTHER" id="PTHR23132">
    <property type="entry name" value="D-ALANINE--D-ALANINE LIGASE"/>
    <property type="match status" value="1"/>
</dbReference>
<dbReference type="PANTHER" id="PTHR23132:SF23">
    <property type="entry name" value="D-ALANINE--D-ALANINE LIGASE B"/>
    <property type="match status" value="1"/>
</dbReference>
<dbReference type="Pfam" id="PF07478">
    <property type="entry name" value="Dala_Dala_lig_C"/>
    <property type="match status" value="1"/>
</dbReference>
<dbReference type="Pfam" id="PF01820">
    <property type="entry name" value="Dala_Dala_lig_N"/>
    <property type="match status" value="1"/>
</dbReference>
<dbReference type="PIRSF" id="PIRSF039102">
    <property type="entry name" value="Ddl/VanB"/>
    <property type="match status" value="1"/>
</dbReference>
<dbReference type="SMART" id="SM01209">
    <property type="entry name" value="GARS_A"/>
    <property type="match status" value="1"/>
</dbReference>
<dbReference type="SUPFAM" id="SSF56059">
    <property type="entry name" value="Glutathione synthetase ATP-binding domain-like"/>
    <property type="match status" value="1"/>
</dbReference>
<dbReference type="SUPFAM" id="SSF52440">
    <property type="entry name" value="PreATP-grasp domain"/>
    <property type="match status" value="1"/>
</dbReference>
<dbReference type="PROSITE" id="PS50975">
    <property type="entry name" value="ATP_GRASP"/>
    <property type="match status" value="1"/>
</dbReference>
<dbReference type="PROSITE" id="PS00843">
    <property type="entry name" value="DALA_DALA_LIGASE_1"/>
    <property type="match status" value="1"/>
</dbReference>
<evidence type="ECO:0000250" key="1"/>
<evidence type="ECO:0000255" key="2">
    <source>
        <dbReference type="HAMAP-Rule" id="MF_00047"/>
    </source>
</evidence>
<reference key="1">
    <citation type="journal article" date="2006" name="Proc. Natl. Acad. Sci. U.S.A.">
        <title>Comparative genomics of the lactic acid bacteria.</title>
        <authorList>
            <person name="Makarova K.S."/>
            <person name="Slesarev A."/>
            <person name="Wolf Y.I."/>
            <person name="Sorokin A."/>
            <person name="Mirkin B."/>
            <person name="Koonin E.V."/>
            <person name="Pavlov A."/>
            <person name="Pavlova N."/>
            <person name="Karamychev V."/>
            <person name="Polouchine N."/>
            <person name="Shakhova V."/>
            <person name="Grigoriev I."/>
            <person name="Lou Y."/>
            <person name="Rohksar D."/>
            <person name="Lucas S."/>
            <person name="Huang K."/>
            <person name="Goodstein D.M."/>
            <person name="Hawkins T."/>
            <person name="Plengvidhya V."/>
            <person name="Welker D."/>
            <person name="Hughes J."/>
            <person name="Goh Y."/>
            <person name="Benson A."/>
            <person name="Baldwin K."/>
            <person name="Lee J.-H."/>
            <person name="Diaz-Muniz I."/>
            <person name="Dosti B."/>
            <person name="Smeianov V."/>
            <person name="Wechter W."/>
            <person name="Barabote R."/>
            <person name="Lorca G."/>
            <person name="Altermann E."/>
            <person name="Barrangou R."/>
            <person name="Ganesan B."/>
            <person name="Xie Y."/>
            <person name="Rawsthorne H."/>
            <person name="Tamir D."/>
            <person name="Parker C."/>
            <person name="Breidt F."/>
            <person name="Broadbent J.R."/>
            <person name="Hutkins R."/>
            <person name="O'Sullivan D."/>
            <person name="Steele J."/>
            <person name="Unlu G."/>
            <person name="Saier M.H. Jr."/>
            <person name="Klaenhammer T."/>
            <person name="Richardson P."/>
            <person name="Kozyavkin S."/>
            <person name="Weimer B.C."/>
            <person name="Mills D.A."/>
        </authorList>
    </citation>
    <scope>NUCLEOTIDE SEQUENCE [LARGE SCALE GENOMIC DNA]</scope>
    <source>
        <strain>ATCC 25745 / CCUG 21536 / LMG 10740 / 183-1w</strain>
    </source>
</reference>